<protein>
    <recommendedName>
        <fullName evidence="1">Ubiquinone biosynthesis O-methyltransferase</fullName>
    </recommendedName>
    <alternativeName>
        <fullName evidence="1">2-polyprenyl-6-hydroxyphenol methylase</fullName>
        <ecNumber evidence="1">2.1.1.222</ecNumber>
    </alternativeName>
    <alternativeName>
        <fullName evidence="1">3-demethylubiquinone 3-O-methyltransferase</fullName>
        <ecNumber evidence="1">2.1.1.64</ecNumber>
    </alternativeName>
</protein>
<keyword id="KW-0489">Methyltransferase</keyword>
<keyword id="KW-1185">Reference proteome</keyword>
<keyword id="KW-0949">S-adenosyl-L-methionine</keyword>
<keyword id="KW-0808">Transferase</keyword>
<keyword id="KW-0831">Ubiquinone biosynthesis</keyword>
<gene>
    <name evidence="1" type="primary">ubiG</name>
    <name type="ordered locus">PP_1765</name>
</gene>
<evidence type="ECO:0000255" key="1">
    <source>
        <dbReference type="HAMAP-Rule" id="MF_00472"/>
    </source>
</evidence>
<comment type="function">
    <text evidence="1">O-methyltransferase that catalyzes the 2 O-methylation steps in the ubiquinone biosynthetic pathway.</text>
</comment>
<comment type="catalytic activity">
    <reaction evidence="1">
        <text>a 3-demethylubiquinol + S-adenosyl-L-methionine = a ubiquinol + S-adenosyl-L-homocysteine + H(+)</text>
        <dbReference type="Rhea" id="RHEA:44380"/>
        <dbReference type="Rhea" id="RHEA-COMP:9566"/>
        <dbReference type="Rhea" id="RHEA-COMP:10914"/>
        <dbReference type="ChEBI" id="CHEBI:15378"/>
        <dbReference type="ChEBI" id="CHEBI:17976"/>
        <dbReference type="ChEBI" id="CHEBI:57856"/>
        <dbReference type="ChEBI" id="CHEBI:59789"/>
        <dbReference type="ChEBI" id="CHEBI:84422"/>
        <dbReference type="EC" id="2.1.1.64"/>
    </reaction>
</comment>
<comment type="catalytic activity">
    <reaction evidence="1">
        <text>a 3-(all-trans-polyprenyl)benzene-1,2-diol + S-adenosyl-L-methionine = a 2-methoxy-6-(all-trans-polyprenyl)phenol + S-adenosyl-L-homocysteine + H(+)</text>
        <dbReference type="Rhea" id="RHEA:31411"/>
        <dbReference type="Rhea" id="RHEA-COMP:9550"/>
        <dbReference type="Rhea" id="RHEA-COMP:9551"/>
        <dbReference type="ChEBI" id="CHEBI:15378"/>
        <dbReference type="ChEBI" id="CHEBI:57856"/>
        <dbReference type="ChEBI" id="CHEBI:59789"/>
        <dbReference type="ChEBI" id="CHEBI:62729"/>
        <dbReference type="ChEBI" id="CHEBI:62731"/>
        <dbReference type="EC" id="2.1.1.222"/>
    </reaction>
</comment>
<comment type="pathway">
    <text evidence="1">Cofactor biosynthesis; ubiquinone biosynthesis.</text>
</comment>
<comment type="similarity">
    <text evidence="1">Belongs to the methyltransferase superfamily. UbiG/COQ3 family.</text>
</comment>
<name>UBIG_PSEPK</name>
<proteinExistence type="inferred from homology"/>
<accession>Q88M10</accession>
<sequence>MSNVDRAEIAKFEALAHRWWDRESEFKPLHEINPLRVNWIDERVSLAGKKVLDVGCGGGILSEAMALRGATVTGIDMGEAPLAVAQLHQLESGVQVEYRQITAEALAEEMPEQFDVVTCLEMLEHVPDPSSVIRACYRMVKPGGQVFFSTINRNPKAYLLAIVGAEYILKMLPRGTHDFKKFIRPSELGAWSRDAGLQVKDIIGLTYNPLTKHYKLNSDVDVNYMIQTLREE</sequence>
<feature type="chain" id="PRO_0000193392" description="Ubiquinone biosynthesis O-methyltransferase">
    <location>
        <begin position="1"/>
        <end position="232"/>
    </location>
</feature>
<feature type="binding site" evidence="1">
    <location>
        <position position="36"/>
    </location>
    <ligand>
        <name>S-adenosyl-L-methionine</name>
        <dbReference type="ChEBI" id="CHEBI:59789"/>
    </ligand>
</feature>
<feature type="binding site" evidence="1">
    <location>
        <position position="55"/>
    </location>
    <ligand>
        <name>S-adenosyl-L-methionine</name>
        <dbReference type="ChEBI" id="CHEBI:59789"/>
    </ligand>
</feature>
<feature type="binding site" evidence="1">
    <location>
        <position position="76"/>
    </location>
    <ligand>
        <name>S-adenosyl-L-methionine</name>
        <dbReference type="ChEBI" id="CHEBI:59789"/>
    </ligand>
</feature>
<feature type="binding site" evidence="1">
    <location>
        <position position="120"/>
    </location>
    <ligand>
        <name>S-adenosyl-L-methionine</name>
        <dbReference type="ChEBI" id="CHEBI:59789"/>
    </ligand>
</feature>
<dbReference type="EC" id="2.1.1.222" evidence="1"/>
<dbReference type="EC" id="2.1.1.64" evidence="1"/>
<dbReference type="EMBL" id="AE015451">
    <property type="protein sequence ID" value="AAN67385.1"/>
    <property type="molecule type" value="Genomic_DNA"/>
</dbReference>
<dbReference type="RefSeq" id="NP_743921.1">
    <property type="nucleotide sequence ID" value="NC_002947.4"/>
</dbReference>
<dbReference type="RefSeq" id="WP_003252662.1">
    <property type="nucleotide sequence ID" value="NZ_CP169744.1"/>
</dbReference>
<dbReference type="SMR" id="Q88M10"/>
<dbReference type="STRING" id="160488.PP_1765"/>
<dbReference type="PaxDb" id="160488-PP_1765"/>
<dbReference type="DNASU" id="1043362"/>
<dbReference type="GeneID" id="83681701"/>
<dbReference type="KEGG" id="ppu:PP_1765"/>
<dbReference type="PATRIC" id="fig|160488.4.peg.1860"/>
<dbReference type="eggNOG" id="COG2227">
    <property type="taxonomic scope" value="Bacteria"/>
</dbReference>
<dbReference type="HOGENOM" id="CLU_042432_5_0_6"/>
<dbReference type="OrthoDB" id="9801538at2"/>
<dbReference type="PhylomeDB" id="Q88M10"/>
<dbReference type="BioCyc" id="PPUT160488:G1G01-1866-MONOMER"/>
<dbReference type="UniPathway" id="UPA00232"/>
<dbReference type="Proteomes" id="UP000000556">
    <property type="component" value="Chromosome"/>
</dbReference>
<dbReference type="GO" id="GO:0102208">
    <property type="term" value="F:2-polyprenyl-6-hydroxyphenol methylase activity"/>
    <property type="evidence" value="ECO:0007669"/>
    <property type="project" value="UniProtKB-EC"/>
</dbReference>
<dbReference type="GO" id="GO:0061542">
    <property type="term" value="F:3-demethylubiquinol 3-O-methyltransferase activity"/>
    <property type="evidence" value="ECO:0007669"/>
    <property type="project" value="UniProtKB-UniRule"/>
</dbReference>
<dbReference type="GO" id="GO:0010420">
    <property type="term" value="F:polyprenyldihydroxybenzoate methyltransferase activity"/>
    <property type="evidence" value="ECO:0007669"/>
    <property type="project" value="InterPro"/>
</dbReference>
<dbReference type="GO" id="GO:0032259">
    <property type="term" value="P:methylation"/>
    <property type="evidence" value="ECO:0007669"/>
    <property type="project" value="UniProtKB-KW"/>
</dbReference>
<dbReference type="CDD" id="cd02440">
    <property type="entry name" value="AdoMet_MTases"/>
    <property type="match status" value="1"/>
</dbReference>
<dbReference type="FunFam" id="3.40.50.150:FF:000028">
    <property type="entry name" value="Ubiquinone biosynthesis O-methyltransferase"/>
    <property type="match status" value="1"/>
</dbReference>
<dbReference type="Gene3D" id="3.40.50.150">
    <property type="entry name" value="Vaccinia Virus protein VP39"/>
    <property type="match status" value="1"/>
</dbReference>
<dbReference type="HAMAP" id="MF_00472">
    <property type="entry name" value="UbiG"/>
    <property type="match status" value="1"/>
</dbReference>
<dbReference type="InterPro" id="IPR029063">
    <property type="entry name" value="SAM-dependent_MTases_sf"/>
</dbReference>
<dbReference type="InterPro" id="IPR010233">
    <property type="entry name" value="UbiG_MeTrfase"/>
</dbReference>
<dbReference type="NCBIfam" id="TIGR01983">
    <property type="entry name" value="UbiG"/>
    <property type="match status" value="1"/>
</dbReference>
<dbReference type="PANTHER" id="PTHR43464">
    <property type="entry name" value="METHYLTRANSFERASE"/>
    <property type="match status" value="1"/>
</dbReference>
<dbReference type="PANTHER" id="PTHR43464:SF19">
    <property type="entry name" value="UBIQUINONE BIOSYNTHESIS O-METHYLTRANSFERASE, MITOCHONDRIAL"/>
    <property type="match status" value="1"/>
</dbReference>
<dbReference type="Pfam" id="PF13489">
    <property type="entry name" value="Methyltransf_23"/>
    <property type="match status" value="1"/>
</dbReference>
<dbReference type="SUPFAM" id="SSF53335">
    <property type="entry name" value="S-adenosyl-L-methionine-dependent methyltransferases"/>
    <property type="match status" value="1"/>
</dbReference>
<organism>
    <name type="scientific">Pseudomonas putida (strain ATCC 47054 / DSM 6125 / CFBP 8728 / NCIMB 11950 / KT2440)</name>
    <dbReference type="NCBI Taxonomy" id="160488"/>
    <lineage>
        <taxon>Bacteria</taxon>
        <taxon>Pseudomonadati</taxon>
        <taxon>Pseudomonadota</taxon>
        <taxon>Gammaproteobacteria</taxon>
        <taxon>Pseudomonadales</taxon>
        <taxon>Pseudomonadaceae</taxon>
        <taxon>Pseudomonas</taxon>
    </lineage>
</organism>
<reference key="1">
    <citation type="journal article" date="2002" name="Environ. Microbiol.">
        <title>Complete genome sequence and comparative analysis of the metabolically versatile Pseudomonas putida KT2440.</title>
        <authorList>
            <person name="Nelson K.E."/>
            <person name="Weinel C."/>
            <person name="Paulsen I.T."/>
            <person name="Dodson R.J."/>
            <person name="Hilbert H."/>
            <person name="Martins dos Santos V.A.P."/>
            <person name="Fouts D.E."/>
            <person name="Gill S.R."/>
            <person name="Pop M."/>
            <person name="Holmes M."/>
            <person name="Brinkac L.M."/>
            <person name="Beanan M.J."/>
            <person name="DeBoy R.T."/>
            <person name="Daugherty S.C."/>
            <person name="Kolonay J.F."/>
            <person name="Madupu R."/>
            <person name="Nelson W.C."/>
            <person name="White O."/>
            <person name="Peterson J.D."/>
            <person name="Khouri H.M."/>
            <person name="Hance I."/>
            <person name="Chris Lee P."/>
            <person name="Holtzapple E.K."/>
            <person name="Scanlan D."/>
            <person name="Tran K."/>
            <person name="Moazzez A."/>
            <person name="Utterback T.R."/>
            <person name="Rizzo M."/>
            <person name="Lee K."/>
            <person name="Kosack D."/>
            <person name="Moestl D."/>
            <person name="Wedler H."/>
            <person name="Lauber J."/>
            <person name="Stjepandic D."/>
            <person name="Hoheisel J."/>
            <person name="Straetz M."/>
            <person name="Heim S."/>
            <person name="Kiewitz C."/>
            <person name="Eisen J.A."/>
            <person name="Timmis K.N."/>
            <person name="Duesterhoeft A."/>
            <person name="Tuemmler B."/>
            <person name="Fraser C.M."/>
        </authorList>
    </citation>
    <scope>NUCLEOTIDE SEQUENCE [LARGE SCALE GENOMIC DNA]</scope>
    <source>
        <strain>ATCC 47054 / DSM 6125 / CFBP 8728 / NCIMB 11950 / KT2440</strain>
    </source>
</reference>